<keyword id="KW-0929">Antimicrobial</keyword>
<keyword id="KW-0081">Bacteriolytic enzyme</keyword>
<keyword id="KW-0903">Direct protein sequencing</keyword>
<keyword id="KW-1015">Disulfide bond</keyword>
<keyword id="KW-0326">Glycosidase</keyword>
<keyword id="KW-0378">Hydrolase</keyword>
<keyword id="KW-1185">Reference proteome</keyword>
<keyword id="KW-0964">Secreted</keyword>
<keyword id="KW-0732">Signal</keyword>
<accession>P61629</accession>
<accession>P00696</accession>
<accession>P79163</accession>
<accession>P79844</accession>
<protein>
    <recommendedName>
        <fullName>Lysozyme C</fullName>
        <ecNumber>3.2.1.17</ecNumber>
    </recommendedName>
    <alternativeName>
        <fullName>1,4-beta-N-acetylmuramidase C</fullName>
    </alternativeName>
</protein>
<evidence type="ECO:0000255" key="1">
    <source>
        <dbReference type="PROSITE-ProRule" id="PRU00680"/>
    </source>
</evidence>
<evidence type="ECO:0000269" key="2">
    <source>
    </source>
</evidence>
<evidence type="ECO:0000305" key="3"/>
<sequence length="148" mass="16409">MKAVIILGLVLLSVTVQGKIFERCELARTLKRLGLDGYRGISLANWVCLAKWESDYNTQATNYNPGDQSTDYGIFQINSHYWCNNGKTPGAVNACHISCNALLQDNIADAVTCAKRVVSDPQGIRAWVAWRNHCQNRDVSQYVQGCGV</sequence>
<reference key="1">
    <citation type="journal article" date="1997" name="Nature">
        <title>Episodic adaptive evolution of primate lysozymes.</title>
        <authorList>
            <person name="Messier W."/>
            <person name="Stewart C.B."/>
        </authorList>
    </citation>
    <scope>NUCLEOTIDE SEQUENCE [MRNA]</scope>
    <source>
        <tissue>Blood</tissue>
    </source>
</reference>
<reference key="2">
    <citation type="journal article" date="1973" name="J. Mol. Biol.">
        <title>Amino acid sequence of lysozyme from baboon milk.</title>
        <authorList>
            <person name="Hermann J."/>
            <person name="Jolles J."/>
            <person name="Buss D.H."/>
            <person name="Jolles P."/>
        </authorList>
    </citation>
    <scope>PROTEIN SEQUENCE OF 19-148</scope>
    <source>
        <tissue>Milk</tissue>
    </source>
</reference>
<feature type="signal peptide" evidence="2">
    <location>
        <begin position="1"/>
        <end position="18"/>
    </location>
</feature>
<feature type="chain" id="PRO_0000018477" description="Lysozyme C">
    <location>
        <begin position="19"/>
        <end position="148"/>
    </location>
</feature>
<feature type="domain" description="C-type lysozyme" evidence="1">
    <location>
        <begin position="19"/>
        <end position="148"/>
    </location>
</feature>
<feature type="active site" evidence="1">
    <location>
        <position position="53"/>
    </location>
</feature>
<feature type="active site" evidence="1">
    <location>
        <position position="71"/>
    </location>
</feature>
<feature type="disulfide bond" evidence="1">
    <location>
        <begin position="24"/>
        <end position="146"/>
    </location>
</feature>
<feature type="disulfide bond" evidence="1">
    <location>
        <begin position="48"/>
        <end position="134"/>
    </location>
</feature>
<feature type="disulfide bond" evidence="1">
    <location>
        <begin position="83"/>
        <end position="99"/>
    </location>
</feature>
<feature type="disulfide bond" evidence="1">
    <location>
        <begin position="95"/>
        <end position="113"/>
    </location>
</feature>
<feature type="sequence conflict" description="In Ref. 2; AA sequence." evidence="3" ref="2">
    <original>N</original>
    <variation>D</variation>
    <location>
        <position position="85"/>
    </location>
</feature>
<feature type="sequence conflict" description="In Ref. 2; AA sequence." evidence="3" ref="2">
    <original>A</original>
    <variation>T</variation>
    <location>
        <position position="108"/>
    </location>
</feature>
<feature type="sequence conflict" description="In Ref. 2; AA sequence." evidence="3" ref="2">
    <original>T</original>
    <variation>A</variation>
    <location>
        <position position="112"/>
    </location>
</feature>
<organism>
    <name type="scientific">Papio anubis</name>
    <name type="common">Olive baboon</name>
    <dbReference type="NCBI Taxonomy" id="9555"/>
    <lineage>
        <taxon>Eukaryota</taxon>
        <taxon>Metazoa</taxon>
        <taxon>Chordata</taxon>
        <taxon>Craniata</taxon>
        <taxon>Vertebrata</taxon>
        <taxon>Euteleostomi</taxon>
        <taxon>Mammalia</taxon>
        <taxon>Eutheria</taxon>
        <taxon>Euarchontoglires</taxon>
        <taxon>Primates</taxon>
        <taxon>Haplorrhini</taxon>
        <taxon>Catarrhini</taxon>
        <taxon>Cercopithecidae</taxon>
        <taxon>Cercopithecinae</taxon>
        <taxon>Papio</taxon>
    </lineage>
</organism>
<gene>
    <name type="primary">LYZ</name>
    <name type="synonym">LZM</name>
</gene>
<proteinExistence type="evidence at protein level"/>
<comment type="function">
    <text>Lysozymes have primarily a bacteriolytic function; those in tissues and body fluids are associated with the monocyte-macrophage system and enhance the activity of immunoagents.</text>
</comment>
<comment type="catalytic activity">
    <reaction>
        <text>Hydrolysis of (1-&gt;4)-beta-linkages between N-acetylmuramic acid and N-acetyl-D-glucosamine residues in a peptidoglycan and between N-acetyl-D-glucosamine residues in chitodextrins.</text>
        <dbReference type="EC" id="3.2.1.17"/>
    </reaction>
</comment>
<comment type="subunit">
    <text>Monomer.</text>
</comment>
<comment type="subcellular location">
    <subcellularLocation>
        <location>Secreted</location>
    </subcellularLocation>
</comment>
<comment type="miscellaneous">
    <text>Lysozyme C is capable of both hydrolysis and transglycosylation; it also shows a slight esterase activity. It acts rapidly on both peptide-substituted and unsubstituted peptidoglycan, and slowly on chitin oligosaccharides.</text>
</comment>
<comment type="similarity">
    <text evidence="1">Belongs to the glycosyl hydrolase 22 family.</text>
</comment>
<dbReference type="EC" id="3.2.1.17"/>
<dbReference type="EMBL" id="U76919">
    <property type="protein sequence ID" value="AAB41207.1"/>
    <property type="molecule type" value="mRNA"/>
</dbReference>
<dbReference type="PIR" id="A00850">
    <property type="entry name" value="LZBA"/>
</dbReference>
<dbReference type="RefSeq" id="NP_001106112.1">
    <property type="nucleotide sequence ID" value="NM_001112642.1"/>
</dbReference>
<dbReference type="SMR" id="P61629"/>
<dbReference type="STRING" id="9555.ENSPANP00000012261"/>
<dbReference type="CAZy" id="GH22">
    <property type="family name" value="Glycoside Hydrolase Family 22"/>
</dbReference>
<dbReference type="Ensembl" id="ENSPANT00000067097.1">
    <property type="protein sequence ID" value="ENSPANP00000060558.1"/>
    <property type="gene ID" value="ENSPANG00000047975.1"/>
</dbReference>
<dbReference type="GeneID" id="100126730"/>
<dbReference type="KEGG" id="panu:100126730"/>
<dbReference type="CTD" id="4069"/>
<dbReference type="eggNOG" id="ENOG502S1S1">
    <property type="taxonomic scope" value="Eukaryota"/>
</dbReference>
<dbReference type="GeneTree" id="ENSGT00940000153832"/>
<dbReference type="HOGENOM" id="CLU_111620_0_1_1"/>
<dbReference type="OrthoDB" id="2524at314294"/>
<dbReference type="Proteomes" id="UP000028761">
    <property type="component" value="Chromosome 9"/>
</dbReference>
<dbReference type="Bgee" id="ENSPANG00000010682">
    <property type="expression patterns" value="Expressed in lung and 65 other cell types or tissues"/>
</dbReference>
<dbReference type="GO" id="GO:0005576">
    <property type="term" value="C:extracellular region"/>
    <property type="evidence" value="ECO:0007669"/>
    <property type="project" value="UniProtKB-SubCell"/>
</dbReference>
<dbReference type="GO" id="GO:0003796">
    <property type="term" value="F:lysozyme activity"/>
    <property type="evidence" value="ECO:0007669"/>
    <property type="project" value="UniProtKB-EC"/>
</dbReference>
<dbReference type="GO" id="GO:0050829">
    <property type="term" value="P:defense response to Gram-negative bacterium"/>
    <property type="evidence" value="ECO:0007669"/>
    <property type="project" value="TreeGrafter"/>
</dbReference>
<dbReference type="GO" id="GO:0050830">
    <property type="term" value="P:defense response to Gram-positive bacterium"/>
    <property type="evidence" value="ECO:0007669"/>
    <property type="project" value="TreeGrafter"/>
</dbReference>
<dbReference type="GO" id="GO:0031640">
    <property type="term" value="P:killing of cells of another organism"/>
    <property type="evidence" value="ECO:0007669"/>
    <property type="project" value="UniProtKB-KW"/>
</dbReference>
<dbReference type="CDD" id="cd16897">
    <property type="entry name" value="LYZ_C"/>
    <property type="match status" value="1"/>
</dbReference>
<dbReference type="FunFam" id="1.10.530.10:FF:000001">
    <property type="entry name" value="Lysozyme C"/>
    <property type="match status" value="1"/>
</dbReference>
<dbReference type="Gene3D" id="1.10.530.10">
    <property type="match status" value="1"/>
</dbReference>
<dbReference type="InterPro" id="IPR001916">
    <property type="entry name" value="Glyco_hydro_22"/>
</dbReference>
<dbReference type="InterPro" id="IPR019799">
    <property type="entry name" value="Glyco_hydro_22_CS"/>
</dbReference>
<dbReference type="InterPro" id="IPR000974">
    <property type="entry name" value="Glyco_hydro_22_lys"/>
</dbReference>
<dbReference type="InterPro" id="IPR023346">
    <property type="entry name" value="Lysozyme-like_dom_sf"/>
</dbReference>
<dbReference type="PANTHER" id="PTHR11407">
    <property type="entry name" value="LYSOZYME C"/>
    <property type="match status" value="1"/>
</dbReference>
<dbReference type="PANTHER" id="PTHR11407:SF28">
    <property type="entry name" value="LYSOZYME C"/>
    <property type="match status" value="1"/>
</dbReference>
<dbReference type="Pfam" id="PF00062">
    <property type="entry name" value="Lys"/>
    <property type="match status" value="1"/>
</dbReference>
<dbReference type="PRINTS" id="PR00137">
    <property type="entry name" value="LYSOZYME"/>
</dbReference>
<dbReference type="PRINTS" id="PR00135">
    <property type="entry name" value="LYZLACT"/>
</dbReference>
<dbReference type="SMART" id="SM00263">
    <property type="entry name" value="LYZ1"/>
    <property type="match status" value="1"/>
</dbReference>
<dbReference type="SUPFAM" id="SSF53955">
    <property type="entry name" value="Lysozyme-like"/>
    <property type="match status" value="1"/>
</dbReference>
<dbReference type="PROSITE" id="PS00128">
    <property type="entry name" value="GLYCOSYL_HYDROL_F22_1"/>
    <property type="match status" value="1"/>
</dbReference>
<dbReference type="PROSITE" id="PS51348">
    <property type="entry name" value="GLYCOSYL_HYDROL_F22_2"/>
    <property type="match status" value="1"/>
</dbReference>
<name>LYSC_PAPAN</name>